<proteinExistence type="inferred from homology"/>
<protein>
    <recommendedName>
        <fullName evidence="1">5-methyltetrahydropteroyltriglutamate--homocysteine methyltransferase</fullName>
        <ecNumber evidence="1">2.1.1.14</ecNumber>
    </recommendedName>
    <alternativeName>
        <fullName evidence="1">Cobalamin-independent methionine synthase</fullName>
    </alternativeName>
    <alternativeName>
        <fullName evidence="1">Methionine synthase, vitamin-B12 independent isozyme</fullName>
    </alternativeName>
</protein>
<organism>
    <name type="scientific">Coxiella burnetii (strain RSA 493 / Nine Mile phase I)</name>
    <dbReference type="NCBI Taxonomy" id="227377"/>
    <lineage>
        <taxon>Bacteria</taxon>
        <taxon>Pseudomonadati</taxon>
        <taxon>Pseudomonadota</taxon>
        <taxon>Gammaproteobacteria</taxon>
        <taxon>Legionellales</taxon>
        <taxon>Coxiellaceae</taxon>
        <taxon>Coxiella</taxon>
    </lineage>
</organism>
<dbReference type="EC" id="2.1.1.14" evidence="1"/>
<dbReference type="EMBL" id="AE016828">
    <property type="protein sequence ID" value="AAO91533.1"/>
    <property type="molecule type" value="Genomic_DNA"/>
</dbReference>
<dbReference type="RefSeq" id="NP_821019.1">
    <property type="nucleotide sequence ID" value="NC_002971.4"/>
</dbReference>
<dbReference type="RefSeq" id="WP_005772138.1">
    <property type="nucleotide sequence ID" value="NC_002971.4"/>
</dbReference>
<dbReference type="SMR" id="Q83A62"/>
<dbReference type="STRING" id="227377.CBU_2048"/>
<dbReference type="EnsemblBacteria" id="AAO91533">
    <property type="protein sequence ID" value="AAO91533"/>
    <property type="gene ID" value="CBU_2048"/>
</dbReference>
<dbReference type="GeneID" id="1209961"/>
<dbReference type="KEGG" id="cbu:CBU_2048"/>
<dbReference type="PATRIC" id="fig|227377.7.peg.2041"/>
<dbReference type="eggNOG" id="COG0620">
    <property type="taxonomic scope" value="Bacteria"/>
</dbReference>
<dbReference type="HOGENOM" id="CLU_013175_0_0_6"/>
<dbReference type="OrthoDB" id="244285at2"/>
<dbReference type="UniPathway" id="UPA00051">
    <property type="reaction ID" value="UER00082"/>
</dbReference>
<dbReference type="Proteomes" id="UP000002671">
    <property type="component" value="Chromosome"/>
</dbReference>
<dbReference type="GO" id="GO:0003871">
    <property type="term" value="F:5-methyltetrahydropteroyltriglutamate-homocysteine S-methyltransferase activity"/>
    <property type="evidence" value="ECO:0007669"/>
    <property type="project" value="UniProtKB-UniRule"/>
</dbReference>
<dbReference type="GO" id="GO:0008270">
    <property type="term" value="F:zinc ion binding"/>
    <property type="evidence" value="ECO:0007669"/>
    <property type="project" value="InterPro"/>
</dbReference>
<dbReference type="GO" id="GO:0009086">
    <property type="term" value="P:methionine biosynthetic process"/>
    <property type="evidence" value="ECO:0007669"/>
    <property type="project" value="UniProtKB-UniRule"/>
</dbReference>
<dbReference type="GO" id="GO:0032259">
    <property type="term" value="P:methylation"/>
    <property type="evidence" value="ECO:0007669"/>
    <property type="project" value="UniProtKB-KW"/>
</dbReference>
<dbReference type="CDD" id="cd03311">
    <property type="entry name" value="CIMS_C_terminal_like"/>
    <property type="match status" value="1"/>
</dbReference>
<dbReference type="CDD" id="cd03312">
    <property type="entry name" value="CIMS_N_terminal_like"/>
    <property type="match status" value="1"/>
</dbReference>
<dbReference type="FunFam" id="3.20.20.210:FF:000002">
    <property type="entry name" value="5-methyltetrahydropteroyltriglutamate--homocysteine methyltransferase"/>
    <property type="match status" value="1"/>
</dbReference>
<dbReference type="FunFam" id="3.20.20.210:FF:000003">
    <property type="entry name" value="5-methyltetrahydropteroyltriglutamate--homocysteine methyltransferase"/>
    <property type="match status" value="1"/>
</dbReference>
<dbReference type="Gene3D" id="3.20.20.210">
    <property type="match status" value="2"/>
</dbReference>
<dbReference type="HAMAP" id="MF_00172">
    <property type="entry name" value="Meth_synth"/>
    <property type="match status" value="1"/>
</dbReference>
<dbReference type="InterPro" id="IPR013215">
    <property type="entry name" value="Cbl-indep_Met_Synth_N"/>
</dbReference>
<dbReference type="InterPro" id="IPR006276">
    <property type="entry name" value="Cobalamin-indep_Met_synthase"/>
</dbReference>
<dbReference type="InterPro" id="IPR002629">
    <property type="entry name" value="Met_Synth_C/arc"/>
</dbReference>
<dbReference type="InterPro" id="IPR038071">
    <property type="entry name" value="UROD/MetE-like_sf"/>
</dbReference>
<dbReference type="NCBIfam" id="TIGR01371">
    <property type="entry name" value="met_syn_B12ind"/>
    <property type="match status" value="1"/>
</dbReference>
<dbReference type="NCBIfam" id="NF003556">
    <property type="entry name" value="PRK05222.1"/>
    <property type="match status" value="1"/>
</dbReference>
<dbReference type="PANTHER" id="PTHR30519">
    <property type="entry name" value="5-METHYLTETRAHYDROPTEROYLTRIGLUTAMATE--HOMOCYSTEINE METHYLTRANSFERASE"/>
    <property type="match status" value="1"/>
</dbReference>
<dbReference type="Pfam" id="PF08267">
    <property type="entry name" value="Meth_synt_1"/>
    <property type="match status" value="1"/>
</dbReference>
<dbReference type="Pfam" id="PF01717">
    <property type="entry name" value="Meth_synt_2"/>
    <property type="match status" value="1"/>
</dbReference>
<dbReference type="PIRSF" id="PIRSF000382">
    <property type="entry name" value="MeTrfase_B12_ind"/>
    <property type="match status" value="1"/>
</dbReference>
<dbReference type="SUPFAM" id="SSF51726">
    <property type="entry name" value="UROD/MetE-like"/>
    <property type="match status" value="2"/>
</dbReference>
<keyword id="KW-0028">Amino-acid biosynthesis</keyword>
<keyword id="KW-0479">Metal-binding</keyword>
<keyword id="KW-0486">Methionine biosynthesis</keyword>
<keyword id="KW-0489">Methyltransferase</keyword>
<keyword id="KW-1185">Reference proteome</keyword>
<keyword id="KW-0677">Repeat</keyword>
<keyword id="KW-0808">Transferase</keyword>
<keyword id="KW-0862">Zinc</keyword>
<sequence>MVYAHNLGFPRIGIKREMKKTVEAYWRGEISQQQLQQQAIELQLTNWKIQAEAGVDLIPVGDFSWYDHVLDMAVRVGAIPSRFKALNSNITDTMFCMARGQAPNGIETSACEMTKWFDTNYHYIVPEFTTNQSFELHHDDLFKSTKLALENNYRAKPVILGPLSFLWLGKCKGESFNKLLLLEKLLPVYAEIFEQLSSLGVEWVQVDEPILVLDLPPEWQQAFLTTYQQLNFFNLKCLLATYFGSLDDNLSLTCQLPVDGLHIDYCRAPDQLDSVLSQLPAEKILSVGIIDGRNIWCNDLNRSLTLLENIQSSLGDRLWVAPSCSLLHVPIDLDQENKLDVELKSWFAFAKQKVAEAAFLTRGLREGRESIGAELKKNEEVIISRKTSKRIHNPNVEKKAASVTERLMRRQHEHSIRKNKQTAQLNLPLFPTTTIGSFPQTSQIRCLRRDYKQGKIDDALYEEKIRQEIAEVIGIQVKLGLDVLVHGEPERNDMVEYFGELLDGIAITSNGWVQSYGSRCVKPPIIFGDVSRERPMTLRWIEYAQSLTTKSVKGMLTGPVTILAWSFVRDDQPRSQTAKQIALALRDEVQDLERSGVRVIQIDEPAFRECLPLRKAAWQDYLEWAVKCFRLASCGVKDETQIHTHMCYSEFNDIIEAIAALDADVITIESSRSEMEILKSFEKFAYPNDIGPGIYDIHSPRIPRVAEIEELAVRALQYIPIERLWINPDCGLKTRNWEETKEALSRMVDAAKHLRKAFSSEKTPTIDLELQPAST</sequence>
<gene>
    <name evidence="1" type="primary">metE</name>
    <name type="ordered locus">CBU_2048</name>
</gene>
<comment type="function">
    <text evidence="1">Catalyzes the transfer of a methyl group from 5-methyltetrahydrofolate to homocysteine resulting in methionine formation.</text>
</comment>
<comment type="catalytic activity">
    <reaction evidence="1">
        <text>5-methyltetrahydropteroyltri-L-glutamate + L-homocysteine = tetrahydropteroyltri-L-glutamate + L-methionine</text>
        <dbReference type="Rhea" id="RHEA:21196"/>
        <dbReference type="ChEBI" id="CHEBI:57844"/>
        <dbReference type="ChEBI" id="CHEBI:58140"/>
        <dbReference type="ChEBI" id="CHEBI:58199"/>
        <dbReference type="ChEBI" id="CHEBI:58207"/>
        <dbReference type="EC" id="2.1.1.14"/>
    </reaction>
</comment>
<comment type="cofactor">
    <cofactor evidence="1">
        <name>Zn(2+)</name>
        <dbReference type="ChEBI" id="CHEBI:29105"/>
    </cofactor>
    <text evidence="1">Binds 1 zinc ion per subunit.</text>
</comment>
<comment type="pathway">
    <text evidence="1">Amino-acid biosynthesis; L-methionine biosynthesis via de novo pathway; L-methionine from L-homocysteine (MetE route): step 1/1.</text>
</comment>
<comment type="similarity">
    <text evidence="1">Belongs to the vitamin-B12 independent methionine synthase family.</text>
</comment>
<name>METE_COXBU</name>
<feature type="chain" id="PRO_0000098628" description="5-methyltetrahydropteroyltriglutamate--homocysteine methyltransferase">
    <location>
        <begin position="1"/>
        <end position="775"/>
    </location>
</feature>
<feature type="active site" description="Proton donor" evidence="1">
    <location>
        <position position="698"/>
    </location>
</feature>
<feature type="binding site" evidence="1">
    <location>
        <begin position="16"/>
        <end position="19"/>
    </location>
    <ligand>
        <name>5-methyltetrahydropteroyltri-L-glutamate</name>
        <dbReference type="ChEBI" id="CHEBI:58207"/>
    </ligand>
</feature>
<feature type="binding site" evidence="1">
    <location>
        <position position="115"/>
    </location>
    <ligand>
        <name>5-methyltetrahydropteroyltri-L-glutamate</name>
        <dbReference type="ChEBI" id="CHEBI:58207"/>
    </ligand>
</feature>
<feature type="binding site" evidence="1">
    <location>
        <begin position="435"/>
        <end position="437"/>
    </location>
    <ligand>
        <name>L-homocysteine</name>
        <dbReference type="ChEBI" id="CHEBI:58199"/>
    </ligand>
</feature>
<feature type="binding site" evidence="1">
    <location>
        <begin position="435"/>
        <end position="437"/>
    </location>
    <ligand>
        <name>L-methionine</name>
        <dbReference type="ChEBI" id="CHEBI:57844"/>
    </ligand>
</feature>
<feature type="binding site" evidence="1">
    <location>
        <position position="488"/>
    </location>
    <ligand>
        <name>L-homocysteine</name>
        <dbReference type="ChEBI" id="CHEBI:58199"/>
    </ligand>
</feature>
<feature type="binding site" evidence="1">
    <location>
        <position position="488"/>
    </location>
    <ligand>
        <name>L-methionine</name>
        <dbReference type="ChEBI" id="CHEBI:57844"/>
    </ligand>
</feature>
<feature type="binding site" evidence="1">
    <location>
        <begin position="519"/>
        <end position="520"/>
    </location>
    <ligand>
        <name>5-methyltetrahydropteroyltri-L-glutamate</name>
        <dbReference type="ChEBI" id="CHEBI:58207"/>
    </ligand>
</feature>
<feature type="binding site" evidence="1">
    <location>
        <position position="565"/>
    </location>
    <ligand>
        <name>5-methyltetrahydropteroyltri-L-glutamate</name>
        <dbReference type="ChEBI" id="CHEBI:58207"/>
    </ligand>
</feature>
<feature type="binding site" evidence="1">
    <location>
        <position position="603"/>
    </location>
    <ligand>
        <name>L-homocysteine</name>
        <dbReference type="ChEBI" id="CHEBI:58199"/>
    </ligand>
</feature>
<feature type="binding site" evidence="1">
    <location>
        <position position="603"/>
    </location>
    <ligand>
        <name>L-methionine</name>
        <dbReference type="ChEBI" id="CHEBI:57844"/>
    </ligand>
</feature>
<feature type="binding site" evidence="1">
    <location>
        <position position="609"/>
    </location>
    <ligand>
        <name>5-methyltetrahydropteroyltri-L-glutamate</name>
        <dbReference type="ChEBI" id="CHEBI:58207"/>
    </ligand>
</feature>
<feature type="binding site" evidence="1">
    <location>
        <position position="645"/>
    </location>
    <ligand>
        <name>Zn(2+)</name>
        <dbReference type="ChEBI" id="CHEBI:29105"/>
        <note>catalytic</note>
    </ligand>
</feature>
<feature type="binding site" evidence="1">
    <location>
        <position position="647"/>
    </location>
    <ligand>
        <name>Zn(2+)</name>
        <dbReference type="ChEBI" id="CHEBI:29105"/>
        <note>catalytic</note>
    </ligand>
</feature>
<feature type="binding site" evidence="1">
    <location>
        <position position="669"/>
    </location>
    <ligand>
        <name>Zn(2+)</name>
        <dbReference type="ChEBI" id="CHEBI:29105"/>
        <note>catalytic</note>
    </ligand>
</feature>
<feature type="binding site" evidence="1">
    <location>
        <position position="730"/>
    </location>
    <ligand>
        <name>Zn(2+)</name>
        <dbReference type="ChEBI" id="CHEBI:29105"/>
        <note>catalytic</note>
    </ligand>
</feature>
<reference key="1">
    <citation type="journal article" date="2003" name="Proc. Natl. Acad. Sci. U.S.A.">
        <title>Complete genome sequence of the Q-fever pathogen, Coxiella burnetii.</title>
        <authorList>
            <person name="Seshadri R."/>
            <person name="Paulsen I.T."/>
            <person name="Eisen J.A."/>
            <person name="Read T.D."/>
            <person name="Nelson K.E."/>
            <person name="Nelson W.C."/>
            <person name="Ward N.L."/>
            <person name="Tettelin H."/>
            <person name="Davidsen T.M."/>
            <person name="Beanan M.J."/>
            <person name="DeBoy R.T."/>
            <person name="Daugherty S.C."/>
            <person name="Brinkac L.M."/>
            <person name="Madupu R."/>
            <person name="Dodson R.J."/>
            <person name="Khouri H.M."/>
            <person name="Lee K.H."/>
            <person name="Carty H.A."/>
            <person name="Scanlan D."/>
            <person name="Heinzen R.A."/>
            <person name="Thompson H.A."/>
            <person name="Samuel J.E."/>
            <person name="Fraser C.M."/>
            <person name="Heidelberg J.F."/>
        </authorList>
    </citation>
    <scope>NUCLEOTIDE SEQUENCE [LARGE SCALE GENOMIC DNA]</scope>
    <source>
        <strain>RSA 493 / Nine Mile phase I</strain>
    </source>
</reference>
<evidence type="ECO:0000255" key="1">
    <source>
        <dbReference type="HAMAP-Rule" id="MF_00172"/>
    </source>
</evidence>
<accession>Q83A62</accession>